<feature type="chain" id="PRO_0000277373" description="Tic20 family protein Ycf60">
    <location>
        <begin position="1"/>
        <end position="204"/>
    </location>
</feature>
<feature type="transmembrane region" description="Helical" evidence="1">
    <location>
        <begin position="5"/>
        <end position="25"/>
    </location>
</feature>
<feature type="transmembrane region" description="Helical" evidence="1">
    <location>
        <begin position="87"/>
        <end position="107"/>
    </location>
</feature>
<feature type="transmembrane region" description="Helical" evidence="1">
    <location>
        <begin position="133"/>
        <end position="153"/>
    </location>
</feature>
<feature type="transmembrane region" description="Helical" evidence="1">
    <location>
        <begin position="159"/>
        <end position="179"/>
    </location>
</feature>
<gene>
    <name type="primary">ycf60</name>
    <name type="ordered locus">Grc000030</name>
</gene>
<name>YCF60_GRATL</name>
<dbReference type="EMBL" id="AY673996">
    <property type="protein sequence ID" value="AAT79612.1"/>
    <property type="status" value="ALT_INIT"/>
    <property type="molecule type" value="Genomic_DNA"/>
</dbReference>
<dbReference type="RefSeq" id="YP_063537.1">
    <property type="nucleotide sequence ID" value="NC_006137.1"/>
</dbReference>
<dbReference type="SMR" id="Q6B923"/>
<dbReference type="GeneID" id="2944152"/>
<dbReference type="GO" id="GO:0031969">
    <property type="term" value="C:chloroplast membrane"/>
    <property type="evidence" value="ECO:0007669"/>
    <property type="project" value="UniProtKB-SubCell"/>
</dbReference>
<dbReference type="InterPro" id="IPR005691">
    <property type="entry name" value="Tic20"/>
</dbReference>
<dbReference type="PANTHER" id="PTHR33510">
    <property type="entry name" value="PROTEIN TIC 20-II, CHLOROPLASTIC"/>
    <property type="match status" value="1"/>
</dbReference>
<dbReference type="PANTHER" id="PTHR33510:SF5">
    <property type="entry name" value="PROTEIN TIC 20-II, CHLOROPLASTIC"/>
    <property type="match status" value="1"/>
</dbReference>
<dbReference type="Pfam" id="PF16166">
    <property type="entry name" value="TIC20"/>
    <property type="match status" value="1"/>
</dbReference>
<organism>
    <name type="scientific">Gracilaria tenuistipitata var. liui</name>
    <name type="common">Red alga</name>
    <dbReference type="NCBI Taxonomy" id="285951"/>
    <lineage>
        <taxon>Eukaryota</taxon>
        <taxon>Rhodophyta</taxon>
        <taxon>Florideophyceae</taxon>
        <taxon>Rhodymeniophycidae</taxon>
        <taxon>Gracilariales</taxon>
        <taxon>Gracilariaceae</taxon>
        <taxon>Gracilaria</taxon>
        <taxon>Gracilaria tenuistipitata</taxon>
    </lineage>
</organism>
<proteinExistence type="inferred from homology"/>
<sequence>MPNKLPSLIIIMLTTFSIILISFIIRQLYLHIAQSYKNHDVNDITIVDRLGSILPYWLPLLEGLQNFGQQILPDYPFNVMQIYKKTLMPLVIFYVTHPTLAVIIFFILYYLFVRNKSPIPDRPFIRFNVLQSILLFLINSLLGATFRALPIEFRMSLYGLMMCNTLFWFVLSTISYSIIKSIEGKYAKIPVISQAVRIQIDNQL</sequence>
<protein>
    <recommendedName>
        <fullName>Tic20 family protein Ycf60</fullName>
    </recommendedName>
</protein>
<keyword id="KW-0150">Chloroplast</keyword>
<keyword id="KW-0472">Membrane</keyword>
<keyword id="KW-0934">Plastid</keyword>
<keyword id="KW-0812">Transmembrane</keyword>
<keyword id="KW-1133">Transmembrane helix</keyword>
<comment type="subcellular location">
    <subcellularLocation>
        <location evidence="2">Plastid</location>
        <location evidence="2">Chloroplast membrane</location>
        <topology evidence="2">Multi-pass membrane protein</topology>
    </subcellularLocation>
</comment>
<comment type="similarity">
    <text evidence="2">Belongs to the Tic20 family.</text>
</comment>
<comment type="sequence caution" evidence="2">
    <conflict type="erroneous initiation">
        <sequence resource="EMBL-CDS" id="AAT79612"/>
    </conflict>
</comment>
<evidence type="ECO:0000255" key="1"/>
<evidence type="ECO:0000305" key="2"/>
<accession>Q6B923</accession>
<reference key="1">
    <citation type="journal article" date="2004" name="J. Mol. Evol.">
        <title>Comparative analysis of the complete plastid genome sequence of the red alga Gracilaria tenuistipitata var. liui provides insights into the evolution of rhodoplasts and their relationship to other plastids.</title>
        <authorList>
            <person name="Hagopian J.C."/>
            <person name="Reis M."/>
            <person name="Kitajima J.P."/>
            <person name="Bhattacharya D."/>
            <person name="de Oliveira M.C."/>
        </authorList>
    </citation>
    <scope>NUCLEOTIDE SEQUENCE [LARGE SCALE GENOMIC DNA]</scope>
</reference>
<geneLocation type="chloroplast"/>